<dbReference type="EC" id="6.3.4.5" evidence="1"/>
<dbReference type="EMBL" id="CP000270">
    <property type="protein sequence ID" value="ABE32178.1"/>
    <property type="molecule type" value="Genomic_DNA"/>
</dbReference>
<dbReference type="RefSeq" id="WP_011489676.1">
    <property type="nucleotide sequence ID" value="NC_007951.1"/>
</dbReference>
<dbReference type="SMR" id="Q13UR1"/>
<dbReference type="STRING" id="266265.Bxe_A0756"/>
<dbReference type="KEGG" id="bxb:DR64_2924"/>
<dbReference type="KEGG" id="bxe:Bxe_A0756"/>
<dbReference type="PATRIC" id="fig|266265.5.peg.3836"/>
<dbReference type="eggNOG" id="COG0137">
    <property type="taxonomic scope" value="Bacteria"/>
</dbReference>
<dbReference type="OrthoDB" id="9801641at2"/>
<dbReference type="UniPathway" id="UPA00068">
    <property type="reaction ID" value="UER00113"/>
</dbReference>
<dbReference type="Proteomes" id="UP000001817">
    <property type="component" value="Chromosome 1"/>
</dbReference>
<dbReference type="GO" id="GO:0005737">
    <property type="term" value="C:cytoplasm"/>
    <property type="evidence" value="ECO:0007669"/>
    <property type="project" value="UniProtKB-SubCell"/>
</dbReference>
<dbReference type="GO" id="GO:0004055">
    <property type="term" value="F:argininosuccinate synthase activity"/>
    <property type="evidence" value="ECO:0007669"/>
    <property type="project" value="UniProtKB-UniRule"/>
</dbReference>
<dbReference type="GO" id="GO:0005524">
    <property type="term" value="F:ATP binding"/>
    <property type="evidence" value="ECO:0007669"/>
    <property type="project" value="UniProtKB-UniRule"/>
</dbReference>
<dbReference type="GO" id="GO:0000053">
    <property type="term" value="P:argininosuccinate metabolic process"/>
    <property type="evidence" value="ECO:0007669"/>
    <property type="project" value="TreeGrafter"/>
</dbReference>
<dbReference type="GO" id="GO:0006526">
    <property type="term" value="P:L-arginine biosynthetic process"/>
    <property type="evidence" value="ECO:0007669"/>
    <property type="project" value="UniProtKB-UniRule"/>
</dbReference>
<dbReference type="GO" id="GO:0000050">
    <property type="term" value="P:urea cycle"/>
    <property type="evidence" value="ECO:0007669"/>
    <property type="project" value="TreeGrafter"/>
</dbReference>
<dbReference type="CDD" id="cd01999">
    <property type="entry name" value="ASS"/>
    <property type="match status" value="1"/>
</dbReference>
<dbReference type="FunFam" id="1.20.5.470:FF:000001">
    <property type="entry name" value="Argininosuccinate synthase"/>
    <property type="match status" value="1"/>
</dbReference>
<dbReference type="FunFam" id="3.40.50.620:FF:000019">
    <property type="entry name" value="Argininosuccinate synthase"/>
    <property type="match status" value="1"/>
</dbReference>
<dbReference type="FunFam" id="3.90.1260.10:FF:000007">
    <property type="entry name" value="Argininosuccinate synthase"/>
    <property type="match status" value="1"/>
</dbReference>
<dbReference type="Gene3D" id="3.90.1260.10">
    <property type="entry name" value="Argininosuccinate synthetase, chain A, domain 2"/>
    <property type="match status" value="1"/>
</dbReference>
<dbReference type="Gene3D" id="3.40.50.620">
    <property type="entry name" value="HUPs"/>
    <property type="match status" value="1"/>
</dbReference>
<dbReference type="Gene3D" id="1.20.5.470">
    <property type="entry name" value="Single helix bin"/>
    <property type="match status" value="1"/>
</dbReference>
<dbReference type="HAMAP" id="MF_00005">
    <property type="entry name" value="Arg_succ_synth_type1"/>
    <property type="match status" value="1"/>
</dbReference>
<dbReference type="InterPro" id="IPR048268">
    <property type="entry name" value="Arginosuc_syn_C"/>
</dbReference>
<dbReference type="InterPro" id="IPR048267">
    <property type="entry name" value="Arginosuc_syn_N"/>
</dbReference>
<dbReference type="InterPro" id="IPR001518">
    <property type="entry name" value="Arginosuc_synth"/>
</dbReference>
<dbReference type="InterPro" id="IPR018223">
    <property type="entry name" value="Arginosuc_synth_CS"/>
</dbReference>
<dbReference type="InterPro" id="IPR023434">
    <property type="entry name" value="Arginosuc_synth_type_1_subfam"/>
</dbReference>
<dbReference type="InterPro" id="IPR024074">
    <property type="entry name" value="AS_cat/multimer_dom_body"/>
</dbReference>
<dbReference type="InterPro" id="IPR014729">
    <property type="entry name" value="Rossmann-like_a/b/a_fold"/>
</dbReference>
<dbReference type="NCBIfam" id="TIGR00032">
    <property type="entry name" value="argG"/>
    <property type="match status" value="1"/>
</dbReference>
<dbReference type="NCBIfam" id="NF001770">
    <property type="entry name" value="PRK00509.1"/>
    <property type="match status" value="1"/>
</dbReference>
<dbReference type="PANTHER" id="PTHR11587">
    <property type="entry name" value="ARGININOSUCCINATE SYNTHASE"/>
    <property type="match status" value="1"/>
</dbReference>
<dbReference type="PANTHER" id="PTHR11587:SF2">
    <property type="entry name" value="ARGININOSUCCINATE SYNTHASE"/>
    <property type="match status" value="1"/>
</dbReference>
<dbReference type="Pfam" id="PF20979">
    <property type="entry name" value="Arginosuc_syn_C"/>
    <property type="match status" value="1"/>
</dbReference>
<dbReference type="Pfam" id="PF00764">
    <property type="entry name" value="Arginosuc_synth"/>
    <property type="match status" value="1"/>
</dbReference>
<dbReference type="SUPFAM" id="SSF52402">
    <property type="entry name" value="Adenine nucleotide alpha hydrolases-like"/>
    <property type="match status" value="1"/>
</dbReference>
<dbReference type="SUPFAM" id="SSF69864">
    <property type="entry name" value="Argininosuccinate synthetase, C-terminal domain"/>
    <property type="match status" value="1"/>
</dbReference>
<dbReference type="PROSITE" id="PS00564">
    <property type="entry name" value="ARGININOSUCCIN_SYN_1"/>
    <property type="match status" value="1"/>
</dbReference>
<dbReference type="PROSITE" id="PS00565">
    <property type="entry name" value="ARGININOSUCCIN_SYN_2"/>
    <property type="match status" value="1"/>
</dbReference>
<name>ASSY_PARXL</name>
<proteinExistence type="inferred from homology"/>
<gene>
    <name evidence="1" type="primary">argG</name>
    <name type="ordered locus">Bxeno_A3640</name>
    <name type="ORF">Bxe_A0756</name>
</gene>
<sequence length="408" mass="45943">MSDIKKVVLAYSGGLDTSVILKWLQDNYDAEVVTFTADIGQGEELEPARKKALQLGIKPENIFIEDLREEFVRDFVFPMFRANTIYEGEYLLGTSIARPLIAKRQIEIARATGAQAVSHGATGKGNDQVRFELGYYALEPGIKVIAPWREWDLLSREKLLAYAEKAGIPIEMKHKQGGAPYSMDANLLHISFEGRHLEDPKAEAEADMWRWTVSPEEAPDQAEYLDIEYEHGDPVAINGKRLSPAEMLTELNRLGGKHGIGRLDLVENRYVGMKSRGCYETPGGTIMLKAHRGIESITLDREVAHLKDDLMPRYAALIYNGYWWSPERRALQVLIDHTQEKVNGWVRVKLYKGSVSVVARDSKETLFDKTIATFDDDGGAYNQADAGGFIKLNALRMRIAENARRQRG</sequence>
<reference key="1">
    <citation type="journal article" date="2006" name="Proc. Natl. Acad. Sci. U.S.A.">
        <title>Burkholderia xenovorans LB400 harbors a multi-replicon, 9.73-Mbp genome shaped for versatility.</title>
        <authorList>
            <person name="Chain P.S.G."/>
            <person name="Denef V.J."/>
            <person name="Konstantinidis K.T."/>
            <person name="Vergez L.M."/>
            <person name="Agullo L."/>
            <person name="Reyes V.L."/>
            <person name="Hauser L."/>
            <person name="Cordova M."/>
            <person name="Gomez L."/>
            <person name="Gonzalez M."/>
            <person name="Land M."/>
            <person name="Lao V."/>
            <person name="Larimer F."/>
            <person name="LiPuma J.J."/>
            <person name="Mahenthiralingam E."/>
            <person name="Malfatti S.A."/>
            <person name="Marx C.J."/>
            <person name="Parnell J.J."/>
            <person name="Ramette A."/>
            <person name="Richardson P."/>
            <person name="Seeger M."/>
            <person name="Smith D."/>
            <person name="Spilker T."/>
            <person name="Sul W.J."/>
            <person name="Tsoi T.V."/>
            <person name="Ulrich L.E."/>
            <person name="Zhulin I.B."/>
            <person name="Tiedje J.M."/>
        </authorList>
    </citation>
    <scope>NUCLEOTIDE SEQUENCE [LARGE SCALE GENOMIC DNA]</scope>
    <source>
        <strain>LB400</strain>
    </source>
</reference>
<accession>Q13UR1</accession>
<protein>
    <recommendedName>
        <fullName evidence="1">Argininosuccinate synthase</fullName>
        <ecNumber evidence="1">6.3.4.5</ecNumber>
    </recommendedName>
    <alternativeName>
        <fullName evidence="1">Citrulline--aspartate ligase</fullName>
    </alternativeName>
</protein>
<feature type="chain" id="PRO_0000263909" description="Argininosuccinate synthase">
    <location>
        <begin position="1"/>
        <end position="408"/>
    </location>
</feature>
<feature type="binding site" evidence="1">
    <location>
        <begin position="10"/>
        <end position="18"/>
    </location>
    <ligand>
        <name>ATP</name>
        <dbReference type="ChEBI" id="CHEBI:30616"/>
    </ligand>
</feature>
<feature type="binding site" evidence="1">
    <location>
        <position position="37"/>
    </location>
    <ligand>
        <name>ATP</name>
        <dbReference type="ChEBI" id="CHEBI:30616"/>
    </ligand>
</feature>
<feature type="binding site" evidence="1">
    <location>
        <position position="90"/>
    </location>
    <ligand>
        <name>L-citrulline</name>
        <dbReference type="ChEBI" id="CHEBI:57743"/>
    </ligand>
</feature>
<feature type="binding site" evidence="1">
    <location>
        <position position="95"/>
    </location>
    <ligand>
        <name>L-citrulline</name>
        <dbReference type="ChEBI" id="CHEBI:57743"/>
    </ligand>
</feature>
<feature type="binding site" evidence="1">
    <location>
        <position position="120"/>
    </location>
    <ligand>
        <name>ATP</name>
        <dbReference type="ChEBI" id="CHEBI:30616"/>
    </ligand>
</feature>
<feature type="binding site" evidence="1">
    <location>
        <position position="122"/>
    </location>
    <ligand>
        <name>L-aspartate</name>
        <dbReference type="ChEBI" id="CHEBI:29991"/>
    </ligand>
</feature>
<feature type="binding site" evidence="1">
    <location>
        <position position="126"/>
    </location>
    <ligand>
        <name>L-aspartate</name>
        <dbReference type="ChEBI" id="CHEBI:29991"/>
    </ligand>
</feature>
<feature type="binding site" evidence="1">
    <location>
        <position position="126"/>
    </location>
    <ligand>
        <name>L-citrulline</name>
        <dbReference type="ChEBI" id="CHEBI:57743"/>
    </ligand>
</feature>
<feature type="binding site" evidence="1">
    <location>
        <position position="127"/>
    </location>
    <ligand>
        <name>L-aspartate</name>
        <dbReference type="ChEBI" id="CHEBI:29991"/>
    </ligand>
</feature>
<feature type="binding site" evidence="1">
    <location>
        <position position="130"/>
    </location>
    <ligand>
        <name>L-citrulline</name>
        <dbReference type="ChEBI" id="CHEBI:57743"/>
    </ligand>
</feature>
<feature type="binding site" evidence="1">
    <location>
        <position position="182"/>
    </location>
    <ligand>
        <name>L-citrulline</name>
        <dbReference type="ChEBI" id="CHEBI:57743"/>
    </ligand>
</feature>
<feature type="binding site" evidence="1">
    <location>
        <position position="191"/>
    </location>
    <ligand>
        <name>L-citrulline</name>
        <dbReference type="ChEBI" id="CHEBI:57743"/>
    </ligand>
</feature>
<feature type="binding site" evidence="1">
    <location>
        <position position="267"/>
    </location>
    <ligand>
        <name>L-citrulline</name>
        <dbReference type="ChEBI" id="CHEBI:57743"/>
    </ligand>
</feature>
<feature type="binding site" evidence="1">
    <location>
        <position position="279"/>
    </location>
    <ligand>
        <name>L-citrulline</name>
        <dbReference type="ChEBI" id="CHEBI:57743"/>
    </ligand>
</feature>
<evidence type="ECO:0000255" key="1">
    <source>
        <dbReference type="HAMAP-Rule" id="MF_00005"/>
    </source>
</evidence>
<comment type="catalytic activity">
    <reaction evidence="1">
        <text>L-citrulline + L-aspartate + ATP = 2-(N(omega)-L-arginino)succinate + AMP + diphosphate + H(+)</text>
        <dbReference type="Rhea" id="RHEA:10932"/>
        <dbReference type="ChEBI" id="CHEBI:15378"/>
        <dbReference type="ChEBI" id="CHEBI:29991"/>
        <dbReference type="ChEBI" id="CHEBI:30616"/>
        <dbReference type="ChEBI" id="CHEBI:33019"/>
        <dbReference type="ChEBI" id="CHEBI:57472"/>
        <dbReference type="ChEBI" id="CHEBI:57743"/>
        <dbReference type="ChEBI" id="CHEBI:456215"/>
        <dbReference type="EC" id="6.3.4.5"/>
    </reaction>
</comment>
<comment type="pathway">
    <text evidence="1">Amino-acid biosynthesis; L-arginine biosynthesis; L-arginine from L-ornithine and carbamoyl phosphate: step 2/3.</text>
</comment>
<comment type="subunit">
    <text evidence="1">Homotetramer.</text>
</comment>
<comment type="subcellular location">
    <subcellularLocation>
        <location evidence="1">Cytoplasm</location>
    </subcellularLocation>
</comment>
<comment type="similarity">
    <text evidence="1">Belongs to the argininosuccinate synthase family. Type 1 subfamily.</text>
</comment>
<keyword id="KW-0028">Amino-acid biosynthesis</keyword>
<keyword id="KW-0055">Arginine biosynthesis</keyword>
<keyword id="KW-0067">ATP-binding</keyword>
<keyword id="KW-0963">Cytoplasm</keyword>
<keyword id="KW-0436">Ligase</keyword>
<keyword id="KW-0547">Nucleotide-binding</keyword>
<keyword id="KW-1185">Reference proteome</keyword>
<organism>
    <name type="scientific">Paraburkholderia xenovorans (strain LB400)</name>
    <dbReference type="NCBI Taxonomy" id="266265"/>
    <lineage>
        <taxon>Bacteria</taxon>
        <taxon>Pseudomonadati</taxon>
        <taxon>Pseudomonadota</taxon>
        <taxon>Betaproteobacteria</taxon>
        <taxon>Burkholderiales</taxon>
        <taxon>Burkholderiaceae</taxon>
        <taxon>Paraburkholderia</taxon>
    </lineage>
</organism>